<comment type="function">
    <text evidence="1">May play a role in DNA repair. It seems to be involved in an RecBC-independent recombinational process of DNA repair. It may act with RecF and RecO.</text>
</comment>
<comment type="similarity">
    <text evidence="1">Belongs to the RecR family.</text>
</comment>
<sequence>MHYPEPISKLIDSFMKLPGIGPKTAVRLAFFVLDMKEDDVLGFAKALVNAKRDLAYCSVCGHITDRDPCYICNDSHRDQSVVCVVQEPKDVIAMEKMKEYQGVYHVLRGAISPMEGIGPEDINIPQLLKRLHDETVQEVILATNPNIEGEATAMYISRLLKPTGIKVTRIAHGLPVGGDLEYADEVTLSKALEGRREV</sequence>
<accession>Q73FI4</accession>
<feature type="chain" id="PRO_0000190274" description="Recombination protein RecR">
    <location>
        <begin position="1"/>
        <end position="198"/>
    </location>
</feature>
<feature type="domain" description="Toprim" evidence="1">
    <location>
        <begin position="80"/>
        <end position="175"/>
    </location>
</feature>
<feature type="zinc finger region" description="C4-type" evidence="1">
    <location>
        <begin position="57"/>
        <end position="72"/>
    </location>
</feature>
<protein>
    <recommendedName>
        <fullName evidence="1">Recombination protein RecR</fullName>
    </recommendedName>
</protein>
<evidence type="ECO:0000255" key="1">
    <source>
        <dbReference type="HAMAP-Rule" id="MF_00017"/>
    </source>
</evidence>
<proteinExistence type="inferred from homology"/>
<keyword id="KW-0227">DNA damage</keyword>
<keyword id="KW-0233">DNA recombination</keyword>
<keyword id="KW-0234">DNA repair</keyword>
<keyword id="KW-0479">Metal-binding</keyword>
<keyword id="KW-0862">Zinc</keyword>
<keyword id="KW-0863">Zinc-finger</keyword>
<name>RECR_BACC1</name>
<gene>
    <name evidence="1" type="primary">recR</name>
    <name type="ordered locus">BCE_0022</name>
</gene>
<reference key="1">
    <citation type="journal article" date="2004" name="Nucleic Acids Res.">
        <title>The genome sequence of Bacillus cereus ATCC 10987 reveals metabolic adaptations and a large plasmid related to Bacillus anthracis pXO1.</title>
        <authorList>
            <person name="Rasko D.A."/>
            <person name="Ravel J."/>
            <person name="Oekstad O.A."/>
            <person name="Helgason E."/>
            <person name="Cer R.Z."/>
            <person name="Jiang L."/>
            <person name="Shores K.A."/>
            <person name="Fouts D.E."/>
            <person name="Tourasse N.J."/>
            <person name="Angiuoli S.V."/>
            <person name="Kolonay J.F."/>
            <person name="Nelson W.C."/>
            <person name="Kolstoe A.-B."/>
            <person name="Fraser C.M."/>
            <person name="Read T.D."/>
        </authorList>
    </citation>
    <scope>NUCLEOTIDE SEQUENCE [LARGE SCALE GENOMIC DNA]</scope>
    <source>
        <strain>ATCC 10987 / NRS 248</strain>
    </source>
</reference>
<organism>
    <name type="scientific">Bacillus cereus (strain ATCC 10987 / NRS 248)</name>
    <dbReference type="NCBI Taxonomy" id="222523"/>
    <lineage>
        <taxon>Bacteria</taxon>
        <taxon>Bacillati</taxon>
        <taxon>Bacillota</taxon>
        <taxon>Bacilli</taxon>
        <taxon>Bacillales</taxon>
        <taxon>Bacillaceae</taxon>
        <taxon>Bacillus</taxon>
        <taxon>Bacillus cereus group</taxon>
    </lineage>
</organism>
<dbReference type="EMBL" id="AE017194">
    <property type="protein sequence ID" value="AAS38958.1"/>
    <property type="molecule type" value="Genomic_DNA"/>
</dbReference>
<dbReference type="SMR" id="Q73FI4"/>
<dbReference type="KEGG" id="bca:BCE_0022"/>
<dbReference type="HOGENOM" id="CLU_060739_1_0_9"/>
<dbReference type="Proteomes" id="UP000002527">
    <property type="component" value="Chromosome"/>
</dbReference>
<dbReference type="GO" id="GO:0003677">
    <property type="term" value="F:DNA binding"/>
    <property type="evidence" value="ECO:0007669"/>
    <property type="project" value="UniProtKB-UniRule"/>
</dbReference>
<dbReference type="GO" id="GO:0008270">
    <property type="term" value="F:zinc ion binding"/>
    <property type="evidence" value="ECO:0007669"/>
    <property type="project" value="UniProtKB-KW"/>
</dbReference>
<dbReference type="GO" id="GO:0006310">
    <property type="term" value="P:DNA recombination"/>
    <property type="evidence" value="ECO:0007669"/>
    <property type="project" value="UniProtKB-UniRule"/>
</dbReference>
<dbReference type="GO" id="GO:0006281">
    <property type="term" value="P:DNA repair"/>
    <property type="evidence" value="ECO:0007669"/>
    <property type="project" value="UniProtKB-UniRule"/>
</dbReference>
<dbReference type="CDD" id="cd01025">
    <property type="entry name" value="TOPRIM_recR"/>
    <property type="match status" value="1"/>
</dbReference>
<dbReference type="Gene3D" id="3.30.60.80">
    <property type="match status" value="1"/>
</dbReference>
<dbReference type="Gene3D" id="3.40.1360.10">
    <property type="match status" value="1"/>
</dbReference>
<dbReference type="Gene3D" id="6.10.250.240">
    <property type="match status" value="1"/>
</dbReference>
<dbReference type="Gene3D" id="1.10.8.420">
    <property type="entry name" value="RecR Domain 1"/>
    <property type="match status" value="1"/>
</dbReference>
<dbReference type="HAMAP" id="MF_00017">
    <property type="entry name" value="RecR"/>
    <property type="match status" value="1"/>
</dbReference>
<dbReference type="InterPro" id="IPR000093">
    <property type="entry name" value="DNA_Rcmb_RecR"/>
</dbReference>
<dbReference type="InterPro" id="IPR023627">
    <property type="entry name" value="Rcmb_RecR"/>
</dbReference>
<dbReference type="InterPro" id="IPR015967">
    <property type="entry name" value="Rcmb_RecR_Znf"/>
</dbReference>
<dbReference type="InterPro" id="IPR006171">
    <property type="entry name" value="TOPRIM_dom"/>
</dbReference>
<dbReference type="InterPro" id="IPR034137">
    <property type="entry name" value="TOPRIM_RecR"/>
</dbReference>
<dbReference type="NCBIfam" id="TIGR00615">
    <property type="entry name" value="recR"/>
    <property type="match status" value="1"/>
</dbReference>
<dbReference type="PANTHER" id="PTHR30446">
    <property type="entry name" value="RECOMBINATION PROTEIN RECR"/>
    <property type="match status" value="1"/>
</dbReference>
<dbReference type="PANTHER" id="PTHR30446:SF0">
    <property type="entry name" value="RECOMBINATION PROTEIN RECR"/>
    <property type="match status" value="1"/>
</dbReference>
<dbReference type="Pfam" id="PF21175">
    <property type="entry name" value="RecR_C"/>
    <property type="match status" value="1"/>
</dbReference>
<dbReference type="Pfam" id="PF21176">
    <property type="entry name" value="RecR_HhH"/>
    <property type="match status" value="1"/>
</dbReference>
<dbReference type="Pfam" id="PF02132">
    <property type="entry name" value="RecR_ZnF"/>
    <property type="match status" value="1"/>
</dbReference>
<dbReference type="Pfam" id="PF13662">
    <property type="entry name" value="Toprim_4"/>
    <property type="match status" value="1"/>
</dbReference>
<dbReference type="SMART" id="SM00493">
    <property type="entry name" value="TOPRIM"/>
    <property type="match status" value="1"/>
</dbReference>
<dbReference type="SUPFAM" id="SSF111304">
    <property type="entry name" value="Recombination protein RecR"/>
    <property type="match status" value="1"/>
</dbReference>
<dbReference type="PROSITE" id="PS01300">
    <property type="entry name" value="RECR"/>
    <property type="match status" value="1"/>
</dbReference>
<dbReference type="PROSITE" id="PS50880">
    <property type="entry name" value="TOPRIM"/>
    <property type="match status" value="1"/>
</dbReference>